<feature type="chain" id="PRO_0000088927" description="Actin">
    <location>
        <begin position="1" status="less than"/>
        <end position="33"/>
    </location>
</feature>
<feature type="non-terminal residue">
    <location>
        <position position="1"/>
    </location>
</feature>
<proteinExistence type="evidence at transcript level"/>
<sequence>ISILASLSTFQQMWISKQEYDESGPSIVHRKCF</sequence>
<accession>Q24733</accession>
<keyword id="KW-0067">ATP-binding</keyword>
<keyword id="KW-0963">Cytoplasm</keyword>
<keyword id="KW-0206">Cytoskeleton</keyword>
<keyword id="KW-0378">Hydrolase</keyword>
<keyword id="KW-0547">Nucleotide-binding</keyword>
<protein>
    <recommendedName>
        <fullName>Actin</fullName>
        <ecNumber evidence="1">3.6.4.-</ecNumber>
    </recommendedName>
</protein>
<comment type="function">
    <text>Actins are highly conserved proteins that are involved in various types of cell motility and are ubiquitously expressed in all eukaryotic cells.</text>
</comment>
<comment type="catalytic activity">
    <reaction evidence="1">
        <text>ATP + H2O = ADP + phosphate + H(+)</text>
        <dbReference type="Rhea" id="RHEA:13065"/>
        <dbReference type="ChEBI" id="CHEBI:15377"/>
        <dbReference type="ChEBI" id="CHEBI:15378"/>
        <dbReference type="ChEBI" id="CHEBI:30616"/>
        <dbReference type="ChEBI" id="CHEBI:43474"/>
        <dbReference type="ChEBI" id="CHEBI:456216"/>
    </reaction>
</comment>
<comment type="subcellular location">
    <subcellularLocation>
        <location>Cytoplasm</location>
        <location>Cytoskeleton</location>
    </subcellularLocation>
</comment>
<comment type="similarity">
    <text evidence="2">Belongs to the actin family.</text>
</comment>
<reference key="1">
    <citation type="submission" date="1995-12" db="EMBL/GenBank/DDBJ databases">
        <authorList>
            <person name="von Samson-Himmelstjerna G."/>
            <person name="Wunderlich G."/>
            <person name="Muehlschlegel F."/>
            <person name="Frosch M."/>
            <person name="Schnieder T."/>
        </authorList>
    </citation>
    <scope>NUCLEOTIDE SEQUENCE [MRNA]</scope>
    <source>
        <tissue>Larva</tissue>
    </source>
</reference>
<evidence type="ECO:0000250" key="1">
    <source>
        <dbReference type="UniProtKB" id="P68137"/>
    </source>
</evidence>
<evidence type="ECO:0000305" key="2"/>
<name>ACT_DICVI</name>
<dbReference type="EC" id="3.6.4.-" evidence="1"/>
<dbReference type="EMBL" id="U40590">
    <property type="protein sequence ID" value="AAA83551.1"/>
    <property type="molecule type" value="mRNA"/>
</dbReference>
<dbReference type="SMR" id="Q24733"/>
<dbReference type="GO" id="GO:0005737">
    <property type="term" value="C:cytoplasm"/>
    <property type="evidence" value="ECO:0007669"/>
    <property type="project" value="UniProtKB-KW"/>
</dbReference>
<dbReference type="GO" id="GO:0005856">
    <property type="term" value="C:cytoskeleton"/>
    <property type="evidence" value="ECO:0007669"/>
    <property type="project" value="UniProtKB-SubCell"/>
</dbReference>
<dbReference type="GO" id="GO:0005524">
    <property type="term" value="F:ATP binding"/>
    <property type="evidence" value="ECO:0007669"/>
    <property type="project" value="UniProtKB-KW"/>
</dbReference>
<dbReference type="GO" id="GO:0016787">
    <property type="term" value="F:hydrolase activity"/>
    <property type="evidence" value="ECO:0007669"/>
    <property type="project" value="UniProtKB-KW"/>
</dbReference>
<dbReference type="FunFam" id="3.30.420.40:FF:000058">
    <property type="entry name" value="Putative actin-related protein 5"/>
    <property type="match status" value="1"/>
</dbReference>
<dbReference type="Gene3D" id="3.30.420.40">
    <property type="match status" value="1"/>
</dbReference>
<dbReference type="InterPro" id="IPR004000">
    <property type="entry name" value="Actin"/>
</dbReference>
<dbReference type="InterPro" id="IPR004001">
    <property type="entry name" value="Actin_CS"/>
</dbReference>
<dbReference type="InterPro" id="IPR043129">
    <property type="entry name" value="ATPase_NBD"/>
</dbReference>
<dbReference type="Pfam" id="PF00022">
    <property type="entry name" value="Actin"/>
    <property type="match status" value="1"/>
</dbReference>
<dbReference type="SUPFAM" id="SSF53067">
    <property type="entry name" value="Actin-like ATPase domain"/>
    <property type="match status" value="1"/>
</dbReference>
<dbReference type="PROSITE" id="PS00432">
    <property type="entry name" value="ACTINS_2"/>
    <property type="match status" value="1"/>
</dbReference>
<organism>
    <name type="scientific">Dictyocaulus viviparus</name>
    <name type="common">Bovine lungworm</name>
    <dbReference type="NCBI Taxonomy" id="29172"/>
    <lineage>
        <taxon>Eukaryota</taxon>
        <taxon>Metazoa</taxon>
        <taxon>Ecdysozoa</taxon>
        <taxon>Nematoda</taxon>
        <taxon>Chromadorea</taxon>
        <taxon>Rhabditida</taxon>
        <taxon>Rhabditina</taxon>
        <taxon>Rhabditomorpha</taxon>
        <taxon>Strongyloidea</taxon>
        <taxon>Metastrongylidae</taxon>
        <taxon>Dictyocaulus</taxon>
    </lineage>
</organism>